<reference key="1">
    <citation type="journal article" date="2005" name="Nucleic Acids Res.">
        <title>Genome dynamics and diversity of Shigella species, the etiologic agents of bacillary dysentery.</title>
        <authorList>
            <person name="Yang F."/>
            <person name="Yang J."/>
            <person name="Zhang X."/>
            <person name="Chen L."/>
            <person name="Jiang Y."/>
            <person name="Yan Y."/>
            <person name="Tang X."/>
            <person name="Wang J."/>
            <person name="Xiong Z."/>
            <person name="Dong J."/>
            <person name="Xue Y."/>
            <person name="Zhu Y."/>
            <person name="Xu X."/>
            <person name="Sun L."/>
            <person name="Chen S."/>
            <person name="Nie H."/>
            <person name="Peng J."/>
            <person name="Xu J."/>
            <person name="Wang Y."/>
            <person name="Yuan Z."/>
            <person name="Wen Y."/>
            <person name="Yao Z."/>
            <person name="Shen Y."/>
            <person name="Qiang B."/>
            <person name="Hou Y."/>
            <person name="Yu J."/>
            <person name="Jin Q."/>
        </authorList>
    </citation>
    <scope>NUCLEOTIDE SEQUENCE [LARGE SCALE GENOMIC DNA]</scope>
    <source>
        <strain>Sd197</strain>
    </source>
</reference>
<organism>
    <name type="scientific">Shigella dysenteriae serotype 1 (strain Sd197)</name>
    <dbReference type="NCBI Taxonomy" id="300267"/>
    <lineage>
        <taxon>Bacteria</taxon>
        <taxon>Pseudomonadati</taxon>
        <taxon>Pseudomonadota</taxon>
        <taxon>Gammaproteobacteria</taxon>
        <taxon>Enterobacterales</taxon>
        <taxon>Enterobacteriaceae</taxon>
        <taxon>Shigella</taxon>
    </lineage>
</organism>
<gene>
    <name evidence="1" type="primary">groEL</name>
    <name evidence="1" type="synonym">groL</name>
    <name type="ordered locus">SDY_4449</name>
</gene>
<proteinExistence type="inferred from homology"/>
<evidence type="ECO:0000255" key="1">
    <source>
        <dbReference type="HAMAP-Rule" id="MF_00600"/>
    </source>
</evidence>
<sequence>MAAKDVKFGNDARVKMLRGVNVLADAVKVTLGPKGRNVVLDKSFGAPTITKDGVSVAREIELEDKFENMGAQMVKEVASKANDAAGDGTTTATVLAQAIITEGLKAVAAGMNPMDLKRGIDKAVTAAVEELKALSVPCSDSKAIAQVGTISANSDETVGKLIAEAMDKVGKEGVITVEDGTGLQDELDVVEGMQFDRGYLSPYFINKPETGAVELESPFILLADKKISNIREMLPVLEAVAKAGKPLLIIAEDVEGEALATLVVNTMRGIVKVAAVKAPGFGDRRKAMLQDIATLTGGTVISEEIGMELEKATLEDLGQAKRVVINKDTTTIIDGVGEEAAIQGRVAQIRQQIEEATSDYDREKLQERVAKLAGGVAVIKVGAATEVEMKEKKARVEDALHATRAAVEEGVVAGGGVALIRVASKLADLRGQNEDQNVGIKVALRAMEAPLRQIVLNCGEEPSVVANTVKGGDGNYGYNAATEEYGNMIDMGILDPTKVTRSALQYAASVAGLMITTECMVTDLPKNDAADLGAAGGMGGMGGMGGMM</sequence>
<keyword id="KW-0067">ATP-binding</keyword>
<keyword id="KW-0143">Chaperone</keyword>
<keyword id="KW-0963">Cytoplasm</keyword>
<keyword id="KW-0413">Isomerase</keyword>
<keyword id="KW-0547">Nucleotide-binding</keyword>
<keyword id="KW-1185">Reference proteome</keyword>
<accession>Q328C4</accession>
<protein>
    <recommendedName>
        <fullName evidence="1">Chaperonin GroEL</fullName>
        <ecNumber evidence="1">5.6.1.7</ecNumber>
    </recommendedName>
    <alternativeName>
        <fullName evidence="1">60 kDa chaperonin</fullName>
    </alternativeName>
    <alternativeName>
        <fullName evidence="1">Chaperonin-60</fullName>
        <shortName evidence="1">Cpn60</shortName>
    </alternativeName>
</protein>
<feature type="chain" id="PRO_0000256986" description="Chaperonin GroEL">
    <location>
        <begin position="1"/>
        <end position="548"/>
    </location>
</feature>
<feature type="binding site" evidence="1">
    <location>
        <begin position="30"/>
        <end position="33"/>
    </location>
    <ligand>
        <name>ATP</name>
        <dbReference type="ChEBI" id="CHEBI:30616"/>
    </ligand>
</feature>
<feature type="binding site" evidence="1">
    <location>
        <position position="51"/>
    </location>
    <ligand>
        <name>ATP</name>
        <dbReference type="ChEBI" id="CHEBI:30616"/>
    </ligand>
</feature>
<feature type="binding site" evidence="1">
    <location>
        <begin position="87"/>
        <end position="91"/>
    </location>
    <ligand>
        <name>ATP</name>
        <dbReference type="ChEBI" id="CHEBI:30616"/>
    </ligand>
</feature>
<feature type="binding site" evidence="1">
    <location>
        <position position="415"/>
    </location>
    <ligand>
        <name>ATP</name>
        <dbReference type="ChEBI" id="CHEBI:30616"/>
    </ligand>
</feature>
<feature type="binding site" evidence="1">
    <location>
        <begin position="479"/>
        <end position="481"/>
    </location>
    <ligand>
        <name>ATP</name>
        <dbReference type="ChEBI" id="CHEBI:30616"/>
    </ligand>
</feature>
<feature type="binding site" evidence="1">
    <location>
        <position position="495"/>
    </location>
    <ligand>
        <name>ATP</name>
        <dbReference type="ChEBI" id="CHEBI:30616"/>
    </ligand>
</feature>
<dbReference type="EC" id="5.6.1.7" evidence="1"/>
<dbReference type="EMBL" id="CP000034">
    <property type="protein sequence ID" value="ABB64331.1"/>
    <property type="molecule type" value="Genomic_DNA"/>
</dbReference>
<dbReference type="RefSeq" id="WP_000729117.1">
    <property type="nucleotide sequence ID" value="NC_007606.1"/>
</dbReference>
<dbReference type="RefSeq" id="YP_405822.1">
    <property type="nucleotide sequence ID" value="NC_007606.1"/>
</dbReference>
<dbReference type="SMR" id="Q328C4"/>
<dbReference type="STRING" id="300267.SDY_4449"/>
<dbReference type="EnsemblBacteria" id="ABB64331">
    <property type="protein sequence ID" value="ABB64331"/>
    <property type="gene ID" value="SDY_4449"/>
</dbReference>
<dbReference type="GeneID" id="93777681"/>
<dbReference type="KEGG" id="sdy:SDY_4449"/>
<dbReference type="PATRIC" id="fig|300267.13.peg.5248"/>
<dbReference type="HOGENOM" id="CLU_016503_3_0_6"/>
<dbReference type="Proteomes" id="UP000002716">
    <property type="component" value="Chromosome"/>
</dbReference>
<dbReference type="GO" id="GO:0005737">
    <property type="term" value="C:cytoplasm"/>
    <property type="evidence" value="ECO:0007669"/>
    <property type="project" value="UniProtKB-SubCell"/>
</dbReference>
<dbReference type="GO" id="GO:0005524">
    <property type="term" value="F:ATP binding"/>
    <property type="evidence" value="ECO:0007669"/>
    <property type="project" value="UniProtKB-UniRule"/>
</dbReference>
<dbReference type="GO" id="GO:0140662">
    <property type="term" value="F:ATP-dependent protein folding chaperone"/>
    <property type="evidence" value="ECO:0007669"/>
    <property type="project" value="InterPro"/>
</dbReference>
<dbReference type="GO" id="GO:0016853">
    <property type="term" value="F:isomerase activity"/>
    <property type="evidence" value="ECO:0007669"/>
    <property type="project" value="UniProtKB-KW"/>
</dbReference>
<dbReference type="GO" id="GO:0051082">
    <property type="term" value="F:unfolded protein binding"/>
    <property type="evidence" value="ECO:0007669"/>
    <property type="project" value="UniProtKB-UniRule"/>
</dbReference>
<dbReference type="GO" id="GO:0042026">
    <property type="term" value="P:protein refolding"/>
    <property type="evidence" value="ECO:0007669"/>
    <property type="project" value="UniProtKB-UniRule"/>
</dbReference>
<dbReference type="CDD" id="cd03344">
    <property type="entry name" value="GroEL"/>
    <property type="match status" value="1"/>
</dbReference>
<dbReference type="FunFam" id="1.10.560.10:FF:000001">
    <property type="entry name" value="60 kDa chaperonin"/>
    <property type="match status" value="1"/>
</dbReference>
<dbReference type="FunFam" id="3.50.7.10:FF:000001">
    <property type="entry name" value="60 kDa chaperonin"/>
    <property type="match status" value="1"/>
</dbReference>
<dbReference type="Gene3D" id="3.50.7.10">
    <property type="entry name" value="GroEL"/>
    <property type="match status" value="1"/>
</dbReference>
<dbReference type="Gene3D" id="1.10.560.10">
    <property type="entry name" value="GroEL-like equatorial domain"/>
    <property type="match status" value="1"/>
</dbReference>
<dbReference type="Gene3D" id="3.30.260.10">
    <property type="entry name" value="TCP-1-like chaperonin intermediate domain"/>
    <property type="match status" value="1"/>
</dbReference>
<dbReference type="HAMAP" id="MF_00600">
    <property type="entry name" value="CH60"/>
    <property type="match status" value="1"/>
</dbReference>
<dbReference type="InterPro" id="IPR018370">
    <property type="entry name" value="Chaperonin_Cpn60_CS"/>
</dbReference>
<dbReference type="InterPro" id="IPR001844">
    <property type="entry name" value="Cpn60/GroEL"/>
</dbReference>
<dbReference type="InterPro" id="IPR002423">
    <property type="entry name" value="Cpn60/GroEL/TCP-1"/>
</dbReference>
<dbReference type="InterPro" id="IPR027409">
    <property type="entry name" value="GroEL-like_apical_dom_sf"/>
</dbReference>
<dbReference type="InterPro" id="IPR027413">
    <property type="entry name" value="GROEL-like_equatorial_sf"/>
</dbReference>
<dbReference type="InterPro" id="IPR027410">
    <property type="entry name" value="TCP-1-like_intermed_sf"/>
</dbReference>
<dbReference type="NCBIfam" id="TIGR02348">
    <property type="entry name" value="GroEL"/>
    <property type="match status" value="1"/>
</dbReference>
<dbReference type="NCBIfam" id="NF000592">
    <property type="entry name" value="PRK00013.1"/>
    <property type="match status" value="1"/>
</dbReference>
<dbReference type="NCBIfam" id="NF009487">
    <property type="entry name" value="PRK12849.1"/>
    <property type="match status" value="1"/>
</dbReference>
<dbReference type="NCBIfam" id="NF009488">
    <property type="entry name" value="PRK12850.1"/>
    <property type="match status" value="1"/>
</dbReference>
<dbReference type="NCBIfam" id="NF009489">
    <property type="entry name" value="PRK12851.1"/>
    <property type="match status" value="1"/>
</dbReference>
<dbReference type="PANTHER" id="PTHR45633">
    <property type="entry name" value="60 KDA HEAT SHOCK PROTEIN, MITOCHONDRIAL"/>
    <property type="match status" value="1"/>
</dbReference>
<dbReference type="Pfam" id="PF00118">
    <property type="entry name" value="Cpn60_TCP1"/>
    <property type="match status" value="1"/>
</dbReference>
<dbReference type="PRINTS" id="PR00298">
    <property type="entry name" value="CHAPERONIN60"/>
</dbReference>
<dbReference type="SUPFAM" id="SSF52029">
    <property type="entry name" value="GroEL apical domain-like"/>
    <property type="match status" value="1"/>
</dbReference>
<dbReference type="SUPFAM" id="SSF48592">
    <property type="entry name" value="GroEL equatorial domain-like"/>
    <property type="match status" value="1"/>
</dbReference>
<dbReference type="SUPFAM" id="SSF54849">
    <property type="entry name" value="GroEL-intermediate domain like"/>
    <property type="match status" value="1"/>
</dbReference>
<dbReference type="PROSITE" id="PS00296">
    <property type="entry name" value="CHAPERONINS_CPN60"/>
    <property type="match status" value="1"/>
</dbReference>
<comment type="function">
    <text evidence="1">Together with its co-chaperonin GroES, plays an essential role in assisting protein folding. The GroEL-GroES system forms a nano-cage that allows encapsulation of the non-native substrate proteins and provides a physical environment optimized to promote and accelerate protein folding.</text>
</comment>
<comment type="catalytic activity">
    <reaction evidence="1">
        <text>ATP + H2O + a folded polypeptide = ADP + phosphate + an unfolded polypeptide.</text>
        <dbReference type="EC" id="5.6.1.7"/>
    </reaction>
</comment>
<comment type="subunit">
    <text evidence="1">Forms a cylinder of 14 subunits composed of two heptameric rings stacked back-to-back. Interacts with the co-chaperonin GroES.</text>
</comment>
<comment type="subcellular location">
    <subcellularLocation>
        <location evidence="1">Cytoplasm</location>
    </subcellularLocation>
</comment>
<comment type="similarity">
    <text evidence="1">Belongs to the chaperonin (HSP60) family.</text>
</comment>
<name>CH60_SHIDS</name>